<keyword id="KW-1003">Cell membrane</keyword>
<keyword id="KW-1015">Disulfide bond</keyword>
<keyword id="KW-0325">Glycoprotein</keyword>
<keyword id="KW-0336">GPI-anchor</keyword>
<keyword id="KW-0449">Lipoprotein</keyword>
<keyword id="KW-0472">Membrane</keyword>
<keyword id="KW-1185">Reference proteome</keyword>
<keyword id="KW-0732">Signal</keyword>
<accession>Q84JV2</accession>
<accession>Q9SUU3</accession>
<feature type="signal peptide" evidence="1">
    <location>
        <begin position="1"/>
        <end position="21"/>
    </location>
</feature>
<feature type="chain" id="PRO_0000457733" description="Early nodulin-like protein 4">
    <location>
        <begin position="22"/>
        <end position="197"/>
    </location>
</feature>
<feature type="propeptide" id="PRO_0000457734" description="Removed in mature form" evidence="1">
    <location>
        <begin position="198"/>
        <end position="221"/>
    </location>
</feature>
<feature type="domain" description="Phytocyanin" evidence="3">
    <location>
        <begin position="29"/>
        <end position="130"/>
    </location>
</feature>
<feature type="region of interest" description="Disordered" evidence="4">
    <location>
        <begin position="130"/>
        <end position="185"/>
    </location>
</feature>
<feature type="lipid moiety-binding region" description="GPI-anchor amidated asparagine" evidence="1">
    <location>
        <position position="197"/>
    </location>
</feature>
<feature type="glycosylation site" description="N-linked (GlcNAc...) asparagine" evidence="2">
    <location>
        <position position="59"/>
    </location>
</feature>
<feature type="glycosylation site" description="N-linked (GlcNAc...) asparagine" evidence="2">
    <location>
        <position position="85"/>
    </location>
</feature>
<feature type="disulfide bond" evidence="3">
    <location>
        <begin position="84"/>
        <end position="118"/>
    </location>
</feature>
<comment type="function">
    <text evidence="7">May act as a carbohydrate transporter.</text>
</comment>
<comment type="subcellular location">
    <subcellularLocation>
        <location evidence="1">Cell membrane</location>
        <topology evidence="1">Lipid-anchor</topology>
        <topology evidence="1">GPI-anchor</topology>
    </subcellularLocation>
</comment>
<comment type="tissue specificity">
    <text evidence="5">Confined to flowers.</text>
</comment>
<comment type="similarity">
    <text evidence="8">Belongs to the early nodulin-like (ENODL) family.</text>
</comment>
<comment type="sequence caution" evidence="8">
    <conflict type="erroneous initiation">
        <sequence resource="EMBL-CDS" id="CAA22576"/>
    </conflict>
    <text>Truncated N-terminus.</text>
</comment>
<comment type="sequence caution" evidence="8">
    <conflict type="erroneous initiation">
        <sequence resource="EMBL-CDS" id="CAB79966"/>
    </conflict>
    <text>Truncated N-terminus.</text>
</comment>
<dbReference type="EMBL" id="AL034567">
    <property type="protein sequence ID" value="CAA22576.1"/>
    <property type="status" value="ALT_INIT"/>
    <property type="molecule type" value="Genomic_DNA"/>
</dbReference>
<dbReference type="EMBL" id="AL161581">
    <property type="protein sequence ID" value="CAB79966.1"/>
    <property type="status" value="ALT_INIT"/>
    <property type="molecule type" value="Genomic_DNA"/>
</dbReference>
<dbReference type="EMBL" id="CP002687">
    <property type="protein sequence ID" value="AEE86068.1"/>
    <property type="molecule type" value="Genomic_DNA"/>
</dbReference>
<dbReference type="EMBL" id="BT002769">
    <property type="protein sequence ID" value="AAO22597.1"/>
    <property type="molecule type" value="mRNA"/>
</dbReference>
<dbReference type="EMBL" id="BT004363">
    <property type="protein sequence ID" value="AAO42357.1"/>
    <property type="molecule type" value="mRNA"/>
</dbReference>
<dbReference type="PIR" id="T05359">
    <property type="entry name" value="T05359"/>
</dbReference>
<dbReference type="RefSeq" id="NP_194975.2">
    <property type="nucleotide sequence ID" value="NM_119401.3"/>
</dbReference>
<dbReference type="SMR" id="Q84JV2"/>
<dbReference type="FunCoup" id="Q84JV2">
    <property type="interactions" value="95"/>
</dbReference>
<dbReference type="STRING" id="3702.Q84JV2"/>
<dbReference type="GlyGen" id="Q84JV2">
    <property type="glycosylation" value="3 sites"/>
</dbReference>
<dbReference type="iPTMnet" id="Q84JV2"/>
<dbReference type="PaxDb" id="3702-AT4G32490.1"/>
<dbReference type="ProteomicsDB" id="191563"/>
<dbReference type="EnsemblPlants" id="AT4G32490.1">
    <property type="protein sequence ID" value="AT4G32490.1"/>
    <property type="gene ID" value="AT4G32490"/>
</dbReference>
<dbReference type="GeneID" id="829384"/>
<dbReference type="Gramene" id="AT4G32490.1">
    <property type="protein sequence ID" value="AT4G32490.1"/>
    <property type="gene ID" value="AT4G32490"/>
</dbReference>
<dbReference type="KEGG" id="ath:AT4G32490"/>
<dbReference type="Araport" id="AT4G32490"/>
<dbReference type="TAIR" id="AT4G32490">
    <property type="gene designation" value="ENODL4"/>
</dbReference>
<dbReference type="HOGENOM" id="CLU_058719_1_0_1"/>
<dbReference type="InParanoid" id="Q84JV2"/>
<dbReference type="OMA" id="TVMSTGH"/>
<dbReference type="PRO" id="PR:Q84JV2"/>
<dbReference type="Proteomes" id="UP000006548">
    <property type="component" value="Chromosome 4"/>
</dbReference>
<dbReference type="ExpressionAtlas" id="Q84JV2">
    <property type="expression patterns" value="baseline and differential"/>
</dbReference>
<dbReference type="GO" id="GO:0005886">
    <property type="term" value="C:plasma membrane"/>
    <property type="evidence" value="ECO:0007669"/>
    <property type="project" value="UniProtKB-SubCell"/>
</dbReference>
<dbReference type="GO" id="GO:0098552">
    <property type="term" value="C:side of membrane"/>
    <property type="evidence" value="ECO:0007669"/>
    <property type="project" value="UniProtKB-KW"/>
</dbReference>
<dbReference type="GO" id="GO:0009055">
    <property type="term" value="F:electron transfer activity"/>
    <property type="evidence" value="ECO:0007669"/>
    <property type="project" value="InterPro"/>
</dbReference>
<dbReference type="CDD" id="cd11019">
    <property type="entry name" value="OsENODL1_like"/>
    <property type="match status" value="1"/>
</dbReference>
<dbReference type="FunFam" id="2.60.40.420:FF:000010">
    <property type="entry name" value="Early nodulin-like protein 1"/>
    <property type="match status" value="1"/>
</dbReference>
<dbReference type="Gene3D" id="2.60.40.420">
    <property type="entry name" value="Cupredoxins - blue copper proteins"/>
    <property type="match status" value="1"/>
</dbReference>
<dbReference type="InterPro" id="IPR008972">
    <property type="entry name" value="Cupredoxin"/>
</dbReference>
<dbReference type="InterPro" id="IPR041846">
    <property type="entry name" value="ENL_dom"/>
</dbReference>
<dbReference type="InterPro" id="IPR039391">
    <property type="entry name" value="Phytocyanin-like"/>
</dbReference>
<dbReference type="InterPro" id="IPR003245">
    <property type="entry name" value="Phytocyanin_dom"/>
</dbReference>
<dbReference type="PANTHER" id="PTHR33021">
    <property type="entry name" value="BLUE COPPER PROTEIN"/>
    <property type="match status" value="1"/>
</dbReference>
<dbReference type="PANTHER" id="PTHR33021:SF185">
    <property type="entry name" value="EARLY NODULIN-LIKE PROTEIN 3-RELATED"/>
    <property type="match status" value="1"/>
</dbReference>
<dbReference type="Pfam" id="PF02298">
    <property type="entry name" value="Cu_bind_like"/>
    <property type="match status" value="1"/>
</dbReference>
<dbReference type="SUPFAM" id="SSF49503">
    <property type="entry name" value="Cupredoxins"/>
    <property type="match status" value="1"/>
</dbReference>
<dbReference type="PROSITE" id="PS51485">
    <property type="entry name" value="PHYTOCYANIN"/>
    <property type="match status" value="1"/>
</dbReference>
<protein>
    <recommendedName>
        <fullName evidence="6">Early nodulin-like protein 4</fullName>
        <shortName evidence="6">AtENODL4</shortName>
    </recommendedName>
    <alternativeName>
        <fullName evidence="8">Phytocyanin-like protein ENODL4</fullName>
    </alternativeName>
</protein>
<reference key="1">
    <citation type="journal article" date="1999" name="Nature">
        <title>Sequence and analysis of chromosome 4 of the plant Arabidopsis thaliana.</title>
        <authorList>
            <person name="Mayer K.F.X."/>
            <person name="Schueller C."/>
            <person name="Wambutt R."/>
            <person name="Murphy G."/>
            <person name="Volckaert G."/>
            <person name="Pohl T."/>
            <person name="Duesterhoeft A."/>
            <person name="Stiekema W."/>
            <person name="Entian K.-D."/>
            <person name="Terryn N."/>
            <person name="Harris B."/>
            <person name="Ansorge W."/>
            <person name="Brandt P."/>
            <person name="Grivell L.A."/>
            <person name="Rieger M."/>
            <person name="Weichselgartner M."/>
            <person name="de Simone V."/>
            <person name="Obermaier B."/>
            <person name="Mache R."/>
            <person name="Mueller M."/>
            <person name="Kreis M."/>
            <person name="Delseny M."/>
            <person name="Puigdomenech P."/>
            <person name="Watson M."/>
            <person name="Schmidtheini T."/>
            <person name="Reichert B."/>
            <person name="Portetelle D."/>
            <person name="Perez-Alonso M."/>
            <person name="Boutry M."/>
            <person name="Bancroft I."/>
            <person name="Vos P."/>
            <person name="Hoheisel J."/>
            <person name="Zimmermann W."/>
            <person name="Wedler H."/>
            <person name="Ridley P."/>
            <person name="Langham S.-A."/>
            <person name="McCullagh B."/>
            <person name="Bilham L."/>
            <person name="Robben J."/>
            <person name="van der Schueren J."/>
            <person name="Grymonprez B."/>
            <person name="Chuang Y.-J."/>
            <person name="Vandenbussche F."/>
            <person name="Braeken M."/>
            <person name="Weltjens I."/>
            <person name="Voet M."/>
            <person name="Bastiaens I."/>
            <person name="Aert R."/>
            <person name="Defoor E."/>
            <person name="Weitzenegger T."/>
            <person name="Bothe G."/>
            <person name="Ramsperger U."/>
            <person name="Hilbert H."/>
            <person name="Braun M."/>
            <person name="Holzer E."/>
            <person name="Brandt A."/>
            <person name="Peters S."/>
            <person name="van Staveren M."/>
            <person name="Dirkse W."/>
            <person name="Mooijman P."/>
            <person name="Klein Lankhorst R."/>
            <person name="Rose M."/>
            <person name="Hauf J."/>
            <person name="Koetter P."/>
            <person name="Berneiser S."/>
            <person name="Hempel S."/>
            <person name="Feldpausch M."/>
            <person name="Lamberth S."/>
            <person name="Van den Daele H."/>
            <person name="De Keyser A."/>
            <person name="Buysshaert C."/>
            <person name="Gielen J."/>
            <person name="Villarroel R."/>
            <person name="De Clercq R."/>
            <person name="van Montagu M."/>
            <person name="Rogers J."/>
            <person name="Cronin A."/>
            <person name="Quail M.A."/>
            <person name="Bray-Allen S."/>
            <person name="Clark L."/>
            <person name="Doggett J."/>
            <person name="Hall S."/>
            <person name="Kay M."/>
            <person name="Lennard N."/>
            <person name="McLay K."/>
            <person name="Mayes R."/>
            <person name="Pettett A."/>
            <person name="Rajandream M.A."/>
            <person name="Lyne M."/>
            <person name="Benes V."/>
            <person name="Rechmann S."/>
            <person name="Borkova D."/>
            <person name="Bloecker H."/>
            <person name="Scharfe M."/>
            <person name="Grimm M."/>
            <person name="Loehnert T.-H."/>
            <person name="Dose S."/>
            <person name="de Haan M."/>
            <person name="Maarse A.C."/>
            <person name="Schaefer M."/>
            <person name="Mueller-Auer S."/>
            <person name="Gabel C."/>
            <person name="Fuchs M."/>
            <person name="Fartmann B."/>
            <person name="Granderath K."/>
            <person name="Dauner D."/>
            <person name="Herzl A."/>
            <person name="Neumann S."/>
            <person name="Argiriou A."/>
            <person name="Vitale D."/>
            <person name="Liguori R."/>
            <person name="Piravandi E."/>
            <person name="Massenet O."/>
            <person name="Quigley F."/>
            <person name="Clabauld G."/>
            <person name="Muendlein A."/>
            <person name="Felber R."/>
            <person name="Schnabl S."/>
            <person name="Hiller R."/>
            <person name="Schmidt W."/>
            <person name="Lecharny A."/>
            <person name="Aubourg S."/>
            <person name="Chefdor F."/>
            <person name="Cooke R."/>
            <person name="Berger C."/>
            <person name="Monfort A."/>
            <person name="Casacuberta E."/>
            <person name="Gibbons T."/>
            <person name="Weber N."/>
            <person name="Vandenbol M."/>
            <person name="Bargues M."/>
            <person name="Terol J."/>
            <person name="Torres A."/>
            <person name="Perez-Perez A."/>
            <person name="Purnelle B."/>
            <person name="Bent E."/>
            <person name="Johnson S."/>
            <person name="Tacon D."/>
            <person name="Jesse T."/>
            <person name="Heijnen L."/>
            <person name="Schwarz S."/>
            <person name="Scholler P."/>
            <person name="Heber S."/>
            <person name="Francs P."/>
            <person name="Bielke C."/>
            <person name="Frishman D."/>
            <person name="Haase D."/>
            <person name="Lemcke K."/>
            <person name="Mewes H.-W."/>
            <person name="Stocker S."/>
            <person name="Zaccaria P."/>
            <person name="Bevan M."/>
            <person name="Wilson R.K."/>
            <person name="de la Bastide M."/>
            <person name="Habermann K."/>
            <person name="Parnell L."/>
            <person name="Dedhia N."/>
            <person name="Gnoj L."/>
            <person name="Schutz K."/>
            <person name="Huang E."/>
            <person name="Spiegel L."/>
            <person name="Sekhon M."/>
            <person name="Murray J."/>
            <person name="Sheet P."/>
            <person name="Cordes M."/>
            <person name="Abu-Threideh J."/>
            <person name="Stoneking T."/>
            <person name="Kalicki J."/>
            <person name="Graves T."/>
            <person name="Harmon G."/>
            <person name="Edwards J."/>
            <person name="Latreille P."/>
            <person name="Courtney L."/>
            <person name="Cloud J."/>
            <person name="Abbott A."/>
            <person name="Scott K."/>
            <person name="Johnson D."/>
            <person name="Minx P."/>
            <person name="Bentley D."/>
            <person name="Fulton B."/>
            <person name="Miller N."/>
            <person name="Greco T."/>
            <person name="Kemp K."/>
            <person name="Kramer J."/>
            <person name="Fulton L."/>
            <person name="Mardis E."/>
            <person name="Dante M."/>
            <person name="Pepin K."/>
            <person name="Hillier L.W."/>
            <person name="Nelson J."/>
            <person name="Spieth J."/>
            <person name="Ryan E."/>
            <person name="Andrews S."/>
            <person name="Geisel C."/>
            <person name="Layman D."/>
            <person name="Du H."/>
            <person name="Ali J."/>
            <person name="Berghoff A."/>
            <person name="Jones K."/>
            <person name="Drone K."/>
            <person name="Cotton M."/>
            <person name="Joshu C."/>
            <person name="Antonoiu B."/>
            <person name="Zidanic M."/>
            <person name="Strong C."/>
            <person name="Sun H."/>
            <person name="Lamar B."/>
            <person name="Yordan C."/>
            <person name="Ma P."/>
            <person name="Zhong J."/>
            <person name="Preston R."/>
            <person name="Vil D."/>
            <person name="Shekher M."/>
            <person name="Matero A."/>
            <person name="Shah R."/>
            <person name="Swaby I.K."/>
            <person name="O'Shaughnessy A."/>
            <person name="Rodriguez M."/>
            <person name="Hoffman J."/>
            <person name="Till S."/>
            <person name="Granat S."/>
            <person name="Shohdy N."/>
            <person name="Hasegawa A."/>
            <person name="Hameed A."/>
            <person name="Lodhi M."/>
            <person name="Johnson A."/>
            <person name="Chen E."/>
            <person name="Marra M.A."/>
            <person name="Martienssen R."/>
            <person name="McCombie W.R."/>
        </authorList>
    </citation>
    <scope>NUCLEOTIDE SEQUENCE [LARGE SCALE GENOMIC DNA]</scope>
    <source>
        <strain>cv. Columbia</strain>
    </source>
</reference>
<reference key="2">
    <citation type="journal article" date="2017" name="Plant J.">
        <title>Araport11: a complete reannotation of the Arabidopsis thaliana reference genome.</title>
        <authorList>
            <person name="Cheng C.Y."/>
            <person name="Krishnakumar V."/>
            <person name="Chan A.P."/>
            <person name="Thibaud-Nissen F."/>
            <person name="Schobel S."/>
            <person name="Town C.D."/>
        </authorList>
    </citation>
    <scope>GENOME REANNOTATION</scope>
    <source>
        <strain>cv. Columbia</strain>
    </source>
</reference>
<reference key="3">
    <citation type="journal article" date="2003" name="Science">
        <title>Empirical analysis of transcriptional activity in the Arabidopsis genome.</title>
        <authorList>
            <person name="Yamada K."/>
            <person name="Lim J."/>
            <person name="Dale J.M."/>
            <person name="Chen H."/>
            <person name="Shinn P."/>
            <person name="Palm C.J."/>
            <person name="Southwick A.M."/>
            <person name="Wu H.C."/>
            <person name="Kim C.J."/>
            <person name="Nguyen M."/>
            <person name="Pham P.K."/>
            <person name="Cheuk R.F."/>
            <person name="Karlin-Newmann G."/>
            <person name="Liu S.X."/>
            <person name="Lam B."/>
            <person name="Sakano H."/>
            <person name="Wu T."/>
            <person name="Yu G."/>
            <person name="Miranda M."/>
            <person name="Quach H.L."/>
            <person name="Tripp M."/>
            <person name="Chang C.H."/>
            <person name="Lee J.M."/>
            <person name="Toriumi M.J."/>
            <person name="Chan M.M."/>
            <person name="Tang C.C."/>
            <person name="Onodera C.S."/>
            <person name="Deng J.M."/>
            <person name="Akiyama K."/>
            <person name="Ansari Y."/>
            <person name="Arakawa T."/>
            <person name="Banh J."/>
            <person name="Banno F."/>
            <person name="Bowser L."/>
            <person name="Brooks S.Y."/>
            <person name="Carninci P."/>
            <person name="Chao Q."/>
            <person name="Choy N."/>
            <person name="Enju A."/>
            <person name="Goldsmith A.D."/>
            <person name="Gurjal M."/>
            <person name="Hansen N.F."/>
            <person name="Hayashizaki Y."/>
            <person name="Johnson-Hopson C."/>
            <person name="Hsuan V.W."/>
            <person name="Iida K."/>
            <person name="Karnes M."/>
            <person name="Khan S."/>
            <person name="Koesema E."/>
            <person name="Ishida J."/>
            <person name="Jiang P.X."/>
            <person name="Jones T."/>
            <person name="Kawai J."/>
            <person name="Kamiya A."/>
            <person name="Meyers C."/>
            <person name="Nakajima M."/>
            <person name="Narusaka M."/>
            <person name="Seki M."/>
            <person name="Sakurai T."/>
            <person name="Satou M."/>
            <person name="Tamse R."/>
            <person name="Vaysberg M."/>
            <person name="Wallender E.K."/>
            <person name="Wong C."/>
            <person name="Yamamura Y."/>
            <person name="Yuan S."/>
            <person name="Shinozaki K."/>
            <person name="Davis R.W."/>
            <person name="Theologis A."/>
            <person name="Ecker J.R."/>
        </authorList>
    </citation>
    <scope>NUCLEOTIDE SEQUENCE [LARGE SCALE MRNA]</scope>
    <source>
        <strain>cv. Columbia</strain>
    </source>
</reference>
<reference key="4">
    <citation type="journal article" date="2003" name="Plant Physiol.">
        <title>Identification of glycosylphosphatidylinositol-anchored proteins in Arabidopsis. A proteomic and genomic analysis.</title>
        <authorList>
            <person name="Borner G.H.H."/>
            <person name="Lilley K.S."/>
            <person name="Stevens T.J."/>
            <person name="Dupree P."/>
        </authorList>
    </citation>
    <scope>GENE FAMILY</scope>
    <source>
        <strain>cv. Columbia</strain>
    </source>
</reference>
<reference key="5">
    <citation type="journal article" date="2009" name="Biosci. Biotechnol. Biochem.">
        <title>Genome-wide identification, structure and expression studies, and mutant collection of 22 early nodulin-like protein genes in Arabidopsis.</title>
        <authorList>
            <person name="Mashiguchi K."/>
            <person name="Asami T."/>
            <person name="Suzuki Y."/>
        </authorList>
    </citation>
    <scope>TISSUE SPECIFICITY</scope>
    <scope>GENE FAMILY</scope>
    <scope>NOMENCLATURE</scope>
    <source>
        <strain>cv. Columbia</strain>
    </source>
</reference>
<reference key="6">
    <citation type="journal article" date="2014" name="Plant Cell Physiol.">
        <title>Emerging functions of nodulin-like proteins in non-nodulating plant species.</title>
        <authorList>
            <person name="Denance N."/>
            <person name="Szurek B."/>
            <person name="Noel L.D."/>
        </authorList>
    </citation>
    <scope>REVIEW ON NODULIN-LIKE PROTEINS</scope>
</reference>
<organism>
    <name type="scientific">Arabidopsis thaliana</name>
    <name type="common">Mouse-ear cress</name>
    <dbReference type="NCBI Taxonomy" id="3702"/>
    <lineage>
        <taxon>Eukaryota</taxon>
        <taxon>Viridiplantae</taxon>
        <taxon>Streptophyta</taxon>
        <taxon>Embryophyta</taxon>
        <taxon>Tracheophyta</taxon>
        <taxon>Spermatophyta</taxon>
        <taxon>Magnoliopsida</taxon>
        <taxon>eudicotyledons</taxon>
        <taxon>Gunneridae</taxon>
        <taxon>Pentapetalae</taxon>
        <taxon>rosids</taxon>
        <taxon>malvids</taxon>
        <taxon>Brassicales</taxon>
        <taxon>Brassicaceae</taxon>
        <taxon>Camelineae</taxon>
        <taxon>Arabidopsis</taxon>
    </lineage>
</organism>
<gene>
    <name evidence="6" type="primary">ENODL4</name>
    <name evidence="6" type="synonym">EN4</name>
    <name evidence="9" type="ordered locus">At4g32490</name>
    <name evidence="10" type="ORF">F8B4.190</name>
</gene>
<sequence>MVFVKMTDVYLMIVMLMGLGFSIELSNGHKFYVGGRDGWVLTPSEDYSHWSHRNRFQVNDTLYFKYVKGKDSVLEVSEKEYNTCNTTHPLTSLSDGDSLFLLSRSDPFFFVSGNSGSCLKGQKLAVTVMSTGHHSHTPRHPSPSPSPSASPVRKALLSPAPIPVHKALSSPAPTPGVDPSHSEVLAPAPGPAAAVRNLAGSVAPGVISLGLVLVIMISSMV</sequence>
<evidence type="ECO:0000255" key="1"/>
<evidence type="ECO:0000255" key="2">
    <source>
        <dbReference type="PROSITE-ProRule" id="PRU00498"/>
    </source>
</evidence>
<evidence type="ECO:0000255" key="3">
    <source>
        <dbReference type="PROSITE-ProRule" id="PRU00818"/>
    </source>
</evidence>
<evidence type="ECO:0000256" key="4">
    <source>
        <dbReference type="SAM" id="MobiDB-lite"/>
    </source>
</evidence>
<evidence type="ECO:0000269" key="5">
    <source>
    </source>
</evidence>
<evidence type="ECO:0000303" key="6">
    <source>
    </source>
</evidence>
<evidence type="ECO:0000303" key="7">
    <source>
    </source>
</evidence>
<evidence type="ECO:0000305" key="8"/>
<evidence type="ECO:0000312" key="9">
    <source>
        <dbReference type="Araport" id="AT4G32490"/>
    </source>
</evidence>
<evidence type="ECO:0000312" key="10">
    <source>
        <dbReference type="EMBL" id="CAA22576.1"/>
    </source>
</evidence>
<name>ENL04_ARATH</name>
<proteinExistence type="evidence at transcript level"/>